<sequence length="219" mass="23707">MSLLNNKAGVISRLADFLGFRPKTGDIDVMNRQSVGSVTISQLAKGFYEPNIESAINDVHNFSIKDVGTIITNKTGVSPEGVSQTDYWAFSGTVTDDSLPPGSPITVLVFGLPVSATTGMTAIEFVAKVRVALQEAIASFTAINSYKDHPTDGSKLEVTYLDNQKHVLSTYSTYGITISQEIISESKPGYGTWNLLGAQTVTLDNQQTPTVFYHFERTA</sequence>
<organism>
    <name type="scientific">Enterobacteria phage T4</name>
    <name type="common">Bacteriophage T4</name>
    <dbReference type="NCBI Taxonomy" id="10665"/>
    <lineage>
        <taxon>Viruses</taxon>
        <taxon>Duplodnaviria</taxon>
        <taxon>Heunggongvirae</taxon>
        <taxon>Uroviricota</taxon>
        <taxon>Caudoviricetes</taxon>
        <taxon>Straboviridae</taxon>
        <taxon>Tevenvirinae</taxon>
        <taxon>Tequatrovirus</taxon>
    </lineage>
</organism>
<evidence type="ECO:0000269" key="1">
    <source>
    </source>
</evidence>
<evidence type="ECO:0000269" key="2">
    <source>
    </source>
</evidence>
<evidence type="ECO:0000269" key="3">
    <source>
    </source>
</evidence>
<evidence type="ECO:0000269" key="4">
    <source>
    </source>
</evidence>
<evidence type="ECO:0000269" key="5">
    <source>
    </source>
</evidence>
<evidence type="ECO:0000303" key="6">
    <source>
    </source>
</evidence>
<evidence type="ECO:0000305" key="7"/>
<evidence type="ECO:0007829" key="8">
    <source>
        <dbReference type="PDB" id="1EL6"/>
    </source>
</evidence>
<organismHost>
    <name type="scientific">Escherichia coli</name>
    <dbReference type="NCBI Taxonomy" id="562"/>
</organismHost>
<feature type="initiator methionine" description="Removed" evidence="2">
    <location>
        <position position="1"/>
    </location>
</feature>
<feature type="chain" id="PRO_0000165001" description="Baseplate wedge protein gp11">
    <location>
        <begin position="2"/>
        <end position="219"/>
    </location>
</feature>
<feature type="helix" evidence="8">
    <location>
        <begin position="15"/>
        <end position="17"/>
    </location>
</feature>
<feature type="turn" evidence="8">
    <location>
        <begin position="30"/>
        <end position="32"/>
    </location>
</feature>
<feature type="helix" evidence="8">
    <location>
        <begin position="40"/>
        <end position="43"/>
    </location>
</feature>
<feature type="turn" evidence="8">
    <location>
        <begin position="44"/>
        <end position="46"/>
    </location>
</feature>
<feature type="helix" evidence="8">
    <location>
        <begin position="52"/>
        <end position="63"/>
    </location>
</feature>
<feature type="strand" evidence="8">
    <location>
        <begin position="69"/>
        <end position="75"/>
    </location>
</feature>
<feature type="strand" evidence="8">
    <location>
        <begin position="85"/>
        <end position="93"/>
    </location>
</feature>
<feature type="strand" evidence="8">
    <location>
        <begin position="104"/>
        <end position="109"/>
    </location>
</feature>
<feature type="strand" evidence="8">
    <location>
        <begin position="112"/>
        <end position="117"/>
    </location>
</feature>
<feature type="helix" evidence="8">
    <location>
        <begin position="122"/>
        <end position="138"/>
    </location>
</feature>
<feature type="strand" evidence="8">
    <location>
        <begin position="141"/>
        <end position="148"/>
    </location>
</feature>
<feature type="strand" evidence="8">
    <location>
        <begin position="155"/>
        <end position="162"/>
    </location>
</feature>
<feature type="strand" evidence="8">
    <location>
        <begin position="171"/>
        <end position="173"/>
    </location>
</feature>
<feature type="strand" evidence="8">
    <location>
        <begin position="176"/>
        <end position="184"/>
    </location>
</feature>
<feature type="strand" evidence="8">
    <location>
        <begin position="193"/>
        <end position="201"/>
    </location>
</feature>
<feature type="strand" evidence="8">
    <location>
        <begin position="210"/>
        <end position="217"/>
    </location>
</feature>
<proteinExistence type="evidence at protein level"/>
<accession>P10929</accession>
<comment type="function">
    <text evidence="1 5 6">Baseplate protein that is part of the baseplate wedge and that connects the short tail fibers to the baseplate (PubMed:15315755). Involved in the tail assembly.</text>
</comment>
<comment type="subunit">
    <text evidence="3 5">Homotrimer (PubMed:19896486, PubMed:27193680). The gp11 trimer interacts with gp10 trimer and with the short tail fiber (STF) composed of the gp12 trimer (PubMed:27193680). Part of the baseplate macromolecular complex which consists of gp5, gp5.4, gp27 (central spike complex); gp6, gp25, gp53 (inner baseplate); gp7, gp8 (intermediate baseplate); gp9, gp10, gp11, gp12 (peripheral); gp48 and gp54 (proximal region of the tail tube) (PubMed:27193680).</text>
</comment>
<comment type="subcellular location">
    <subcellularLocation>
        <location evidence="1 2 4 5">Virion</location>
    </subcellularLocation>
    <text evidence="6">Present in 18 copies in the baseplate.</text>
</comment>
<comment type="induction">
    <text evidence="7">Expressed in the late phase of the viral replicative cycle.</text>
</comment>
<gene>
    <name type="primary">11</name>
</gene>
<name>BP11_BPT4</name>
<protein>
    <recommendedName>
        <fullName evidence="7">Baseplate wedge protein gp11</fullName>
    </recommendedName>
    <alternativeName>
        <fullName>Gene product 11</fullName>
        <shortName>gp11</shortName>
    </alternativeName>
</protein>
<dbReference type="EMBL" id="X14192">
    <property type="protein sequence ID" value="CAA32397.1"/>
    <property type="molecule type" value="Genomic_DNA"/>
</dbReference>
<dbReference type="EMBL" id="X06792">
    <property type="protein sequence ID" value="CAA29950.1"/>
    <property type="molecule type" value="Genomic_DNA"/>
</dbReference>
<dbReference type="EMBL" id="AF158101">
    <property type="protein sequence ID" value="AAD42416.1"/>
    <property type="molecule type" value="Genomic_DNA"/>
</dbReference>
<dbReference type="EMBL" id="M26253">
    <property type="protein sequence ID" value="AAA32494.1"/>
    <property type="molecule type" value="Genomic_DNA"/>
</dbReference>
<dbReference type="PIR" id="S04084">
    <property type="entry name" value="GLBPT4"/>
</dbReference>
<dbReference type="RefSeq" id="NP_049769.1">
    <property type="nucleotide sequence ID" value="NC_000866.4"/>
</dbReference>
<dbReference type="PDB" id="1EL6">
    <property type="method" value="X-ray"/>
    <property type="resolution" value="2.00 A"/>
    <property type="chains" value="A/B/C=1-219"/>
</dbReference>
<dbReference type="PDB" id="1PDF">
    <property type="method" value="EM"/>
    <property type="resolution" value="12.00 A"/>
    <property type="chains" value="A/B/C/D/E/F/G/H/I/J/K/L/M/N/O/P/Q/R=1-219"/>
</dbReference>
<dbReference type="PDB" id="1TJA">
    <property type="method" value="EM"/>
    <property type="resolution" value="16.00 A"/>
    <property type="chains" value="F/G/H=1-219"/>
</dbReference>
<dbReference type="PDB" id="5IV5">
    <property type="method" value="EM"/>
    <property type="resolution" value="4.11 A"/>
    <property type="chains" value="AF/AG/AH/CI/CJ/DA/FB/FC/FD/HE/HF/HG/L/M/N/i/j/k=1-219"/>
</dbReference>
<dbReference type="PDB" id="5IV7">
    <property type="method" value="EM"/>
    <property type="resolution" value="6.77 A"/>
    <property type="chains" value="BA/BB/BC/DC/DD/DE/FE/FF/FG/L/M/N/b/c/d/r/s/t=1-219"/>
</dbReference>
<dbReference type="PDBsum" id="1EL6"/>
<dbReference type="PDBsum" id="1PDF"/>
<dbReference type="PDBsum" id="1TJA"/>
<dbReference type="PDBsum" id="5IV5"/>
<dbReference type="PDBsum" id="5IV7"/>
<dbReference type="SMR" id="P10929"/>
<dbReference type="TCDB" id="1.K.1.1.1">
    <property type="family name" value="the gp27/5 t4-baseplate (t4-bp) family"/>
</dbReference>
<dbReference type="GeneID" id="1258638"/>
<dbReference type="KEGG" id="vg:1258638"/>
<dbReference type="OrthoDB" id="8112at10239"/>
<dbReference type="EvolutionaryTrace" id="P10929"/>
<dbReference type="Proteomes" id="UP000009087">
    <property type="component" value="Segment"/>
</dbReference>
<dbReference type="GO" id="GO:0098025">
    <property type="term" value="C:virus tail, baseplate"/>
    <property type="evidence" value="ECO:0000314"/>
    <property type="project" value="UniProtKB"/>
</dbReference>
<dbReference type="GO" id="GO:0098003">
    <property type="term" value="P:viral tail assembly"/>
    <property type="evidence" value="ECO:0007669"/>
    <property type="project" value="UniProtKB-KW"/>
</dbReference>
<dbReference type="Gene3D" id="2.20.20.20">
    <property type="entry name" value="Baseplate structural protein gp11, C-terminal domain"/>
    <property type="match status" value="1"/>
</dbReference>
<dbReference type="Gene3D" id="3.90.1160.10">
    <property type="entry name" value="Baseplate structural protein gp11, finger domain"/>
    <property type="match status" value="1"/>
</dbReference>
<dbReference type="Gene3D" id="1.10.286.30">
    <property type="entry name" value="Baseplate structural protein GP11, N-terminal domain"/>
    <property type="match status" value="1"/>
</dbReference>
<dbReference type="InterPro" id="IPR014791">
    <property type="entry name" value="Baseplate_struct_Gp11"/>
</dbReference>
<dbReference type="InterPro" id="IPR043180">
    <property type="entry name" value="Baseplate_struct_Gp11_C"/>
</dbReference>
<dbReference type="InterPro" id="IPR015982">
    <property type="entry name" value="Baseplate_struct_Gp11_N_sf"/>
</dbReference>
<dbReference type="InterPro" id="IPR036214">
    <property type="entry name" value="Gp11_sf"/>
</dbReference>
<dbReference type="InterPro" id="IPR015976">
    <property type="entry name" value="Phage_T4_Gp11_C"/>
</dbReference>
<dbReference type="Pfam" id="PF08677">
    <property type="entry name" value="GP11"/>
    <property type="match status" value="1"/>
</dbReference>
<dbReference type="SUPFAM" id="SSF56558">
    <property type="entry name" value="Baseplate structural protein gp11"/>
    <property type="match status" value="1"/>
</dbReference>
<keyword id="KW-0002">3D-structure</keyword>
<keyword id="KW-0903">Direct protein sequencing</keyword>
<keyword id="KW-1185">Reference proteome</keyword>
<keyword id="KW-1226">Viral baseplate protein</keyword>
<keyword id="KW-1188">Viral release from host cell</keyword>
<keyword id="KW-1245">Viral tail assembly</keyword>
<keyword id="KW-1227">Viral tail protein</keyword>
<keyword id="KW-0946">Virion</keyword>
<reference key="1">
    <citation type="journal article" date="1989" name="Nucleic Acids Res.">
        <title>Nucleotide sequences of bacteriophage T4 genes 9, 10 and 11.</title>
        <authorList>
            <person name="Prilipov A.G."/>
            <person name="Selivanov N.A."/>
            <person name="Efimov V.P."/>
            <person name="Marusich E.I."/>
            <person name="Mesyanzhinov V.V."/>
        </authorList>
    </citation>
    <scope>NUCLEOTIDE SEQUENCE [GENOMIC DNA]</scope>
    <source>
        <strain>D</strain>
    </source>
</reference>
<reference key="2">
    <citation type="journal article" date="1989" name="DNA">
        <title>Using transposon Tn5 insertions to sequence bacteriophage T4 gene 11.</title>
        <authorList>
            <person name="Barrett B.K."/>
            <person name="Berget P.B."/>
        </authorList>
    </citation>
    <scope>NUCLEOTIDE SEQUENCE [GENOMIC DNA]</scope>
    <source>
        <strain>D</strain>
    </source>
</reference>
<reference key="3">
    <citation type="journal article" date="2003" name="Microbiol. Mol. Biol. Rev.">
        <title>Bacteriophage T4 genome.</title>
        <authorList>
            <person name="Miller E.S."/>
            <person name="Kutter E."/>
            <person name="Mosig G."/>
            <person name="Arisaka F."/>
            <person name="Kunisawa T."/>
            <person name="Ruger W."/>
        </authorList>
    </citation>
    <scope>NUCLEOTIDE SEQUENCE [LARGE SCALE GENOMIC DNA]</scope>
</reference>
<reference key="4">
    <citation type="journal article" date="1988" name="Nucleic Acids Res.">
        <title>Nucleotide and deduced amino acid sequence of bacteriophage T4 gene 12.</title>
        <authorList>
            <person name="Selivanov N.A."/>
            <person name="Prilipov A.G."/>
            <person name="Mesyanzhinov V.V."/>
        </authorList>
    </citation>
    <scope>NUCLEOTIDE SEQUENCE [GENOMIC DNA] OF 211-219</scope>
    <source>
        <strain>D</strain>
    </source>
</reference>
<reference key="5">
    <citation type="journal article" date="2004" name="J. Bacteriol.">
        <title>Processing of the tail lysozyme (gp5) of bacteriophage T4.</title>
        <authorList>
            <person name="Ye N."/>
            <person name="Nemoto N."/>
        </authorList>
    </citation>
    <scope>PROTEIN SEQUENCE OF 2-10</scope>
    <scope>SUBCELLULAR LOCATION</scope>
</reference>
<reference key="6">
    <citation type="journal article" date="1990" name="J. Virol.">
        <title>Structure of the bacteriophage T4 baseplate as determined by chemical cross-linking.</title>
        <authorList>
            <person name="Watts N.R."/>
            <person name="Coombs D.H."/>
        </authorList>
    </citation>
    <scope>SUBCELLULAR LOCATION</scope>
</reference>
<reference key="7">
    <citation type="journal article" date="2003" name="Cell. Mol. Life Sci.">
        <title>Structure and morphogenesis of bacteriophage T4.</title>
        <authorList>
            <person name="Leiman P.G."/>
            <person name="Kanamaru S."/>
            <person name="Mesyanzhinov V.V."/>
            <person name="Arisaka F."/>
            <person name="Rossmann M.G."/>
        </authorList>
    </citation>
    <scope>REVIEW</scope>
</reference>
<reference key="8">
    <citation type="journal article" date="2010" name="Virol. J.">
        <title>Morphogenesis of the T4 tail and tail fibers.</title>
        <authorList>
            <person name="Leiman P.G."/>
            <person name="Arisaka F."/>
            <person name="van Raaij M.J."/>
            <person name="Kostyuchenko V.A."/>
            <person name="Aksyuk A.A."/>
            <person name="Kanamaru S."/>
            <person name="Rossmann M.G."/>
        </authorList>
    </citation>
    <scope>REVIEW ON FUNCTION</scope>
</reference>
<reference key="9">
    <citation type="journal article" date="2010" name="J. Mol. Biol.">
        <title>The baseplate wedges of bacteriophage T4 spontaneously assemble into hubless baseplate-like structure in vitro.</title>
        <authorList>
            <person name="Yap M.L."/>
            <person name="Mio K."/>
            <person name="Leiman P.G."/>
            <person name="Kanamaru S."/>
            <person name="Arisaka F."/>
        </authorList>
    </citation>
    <scope>SUBUNIT</scope>
</reference>
<reference key="10">
    <citation type="journal article" date="2004" name="Cell">
        <title>Three-dimensional rearrangement of proteins in the tail of bacteriophage T4 on infection of its host.</title>
        <authorList>
            <person name="Leiman P.G."/>
            <person name="Chipman P.R."/>
            <person name="Kostyuchenko V.A."/>
            <person name="Mesyanzhinov V.V."/>
            <person name="Rossmann M.G."/>
        </authorList>
    </citation>
    <scope>STRUCTURE BY ELECTRON MICROSCOPY (17.0 ANGSTROMS) OF THE CONTRACTED TAIL</scope>
    <scope>SUBCELLULAR LOCATION</scope>
    <scope>FUNCTION</scope>
</reference>
<reference key="11">
    <citation type="journal article" date="2000" name="J. Mol. Biol.">
        <title>Structure of bacteriophage T4 gene product 11, the interface between the baseplate and short tail fibers.</title>
        <authorList>
            <person name="Leiman P.G."/>
            <person name="Kostyuchenko V.A."/>
            <person name="Shneider M.M."/>
            <person name="Kurochkina L.P."/>
            <person name="Mesyanzhinov V.V."/>
            <person name="Rossmann M.G."/>
        </authorList>
    </citation>
    <scope>X-RAY CRYSTALLOGRAPHY (2.0 ANGSTROMS) OF 12-219</scope>
    <scope>SUBUNIT</scope>
</reference>
<reference key="12">
    <citation type="journal article" date="2016" name="Nature">
        <title>Structure of the T4 baseplate and its function in triggering sheath contraction.</title>
        <authorList>
            <person name="Taylor N.M."/>
            <person name="Prokhorov N.S."/>
            <person name="Guerrero-Ferreira R.C."/>
            <person name="Shneider M.M."/>
            <person name="Browning C."/>
            <person name="Goldie K.N."/>
            <person name="Stahlberg H."/>
            <person name="Leiman P.G."/>
        </authorList>
    </citation>
    <scope>STRUCTURE BY ELECTRON MICROSCOPY (4.11 ANGSTROMS)</scope>
    <scope>SUBUNIT</scope>
    <scope>SUBCELLULAR LOCATION</scope>
    <scope>FUNCTION</scope>
</reference>